<evidence type="ECO:0000250" key="1"/>
<evidence type="ECO:0000256" key="2">
    <source>
        <dbReference type="SAM" id="MobiDB-lite"/>
    </source>
</evidence>
<evidence type="ECO:0000269" key="3">
    <source>
    </source>
</evidence>
<evidence type="ECO:0000305" key="4"/>
<keyword id="KW-0378">Hydrolase</keyword>
<keyword id="KW-0597">Phosphoprotein</keyword>
<keyword id="KW-1185">Reference proteome</keyword>
<comment type="function">
    <text evidence="1">The natural substrate for this enzyme may be peptidyl-tRNAs which drop off the ribosome during protein synthesis.</text>
</comment>
<comment type="catalytic activity">
    <reaction>
        <text>an N-acyl-L-alpha-aminoacyl-tRNA + H2O = an N-acyl-L-amino acid + a tRNA + H(+)</text>
        <dbReference type="Rhea" id="RHEA:54448"/>
        <dbReference type="Rhea" id="RHEA-COMP:10123"/>
        <dbReference type="Rhea" id="RHEA-COMP:13883"/>
        <dbReference type="ChEBI" id="CHEBI:15377"/>
        <dbReference type="ChEBI" id="CHEBI:15378"/>
        <dbReference type="ChEBI" id="CHEBI:59874"/>
        <dbReference type="ChEBI" id="CHEBI:78442"/>
        <dbReference type="ChEBI" id="CHEBI:138191"/>
        <dbReference type="EC" id="3.1.1.29"/>
    </reaction>
</comment>
<comment type="similarity">
    <text evidence="4">Belongs to the PTH2 family.</text>
</comment>
<protein>
    <recommendedName>
        <fullName>Probable peptidyl-tRNA hydrolase 2</fullName>
        <shortName>PTH 2</shortName>
        <ecNumber>3.1.1.29</ecNumber>
    </recommendedName>
</protein>
<organism>
    <name type="scientific">Schizosaccharomyces pombe (strain 972 / ATCC 24843)</name>
    <name type="common">Fission yeast</name>
    <dbReference type="NCBI Taxonomy" id="284812"/>
    <lineage>
        <taxon>Eukaryota</taxon>
        <taxon>Fungi</taxon>
        <taxon>Dikarya</taxon>
        <taxon>Ascomycota</taxon>
        <taxon>Taphrinomycotina</taxon>
        <taxon>Schizosaccharomycetes</taxon>
        <taxon>Schizosaccharomycetales</taxon>
        <taxon>Schizosaccharomycetaceae</taxon>
        <taxon>Schizosaccharomyces</taxon>
    </lineage>
</organism>
<dbReference type="EC" id="3.1.1.29"/>
<dbReference type="EMBL" id="CU329670">
    <property type="protein sequence ID" value="CAB11650.1"/>
    <property type="molecule type" value="Genomic_DNA"/>
</dbReference>
<dbReference type="PIR" id="T37947">
    <property type="entry name" value="T37947"/>
</dbReference>
<dbReference type="SMR" id="O13830"/>
<dbReference type="BioGRID" id="278600">
    <property type="interactions" value="4"/>
</dbReference>
<dbReference type="FunCoup" id="O13830">
    <property type="interactions" value="857"/>
</dbReference>
<dbReference type="IntAct" id="O13830">
    <property type="interactions" value="1"/>
</dbReference>
<dbReference type="STRING" id="284812.O13830"/>
<dbReference type="iPTMnet" id="O13830"/>
<dbReference type="PaxDb" id="4896-SPAC19A8.14.1"/>
<dbReference type="EnsemblFungi" id="SPAC19A8.14.1">
    <property type="protein sequence ID" value="SPAC19A8.14.1:pep"/>
    <property type="gene ID" value="SPAC19A8.14"/>
</dbReference>
<dbReference type="KEGG" id="spo:2542124"/>
<dbReference type="PomBase" id="SPAC19A8.14"/>
<dbReference type="VEuPathDB" id="FungiDB:SPAC19A8.14"/>
<dbReference type="eggNOG" id="KOG3282">
    <property type="taxonomic scope" value="Eukaryota"/>
</dbReference>
<dbReference type="HOGENOM" id="CLU_073661_0_0_1"/>
<dbReference type="InParanoid" id="O13830"/>
<dbReference type="OMA" id="VRIWENA"/>
<dbReference type="PhylomeDB" id="O13830"/>
<dbReference type="Reactome" id="R-SPO-5689880">
    <property type="pathway name" value="Ub-specific processing proteases"/>
</dbReference>
<dbReference type="PRO" id="PR:O13830"/>
<dbReference type="Proteomes" id="UP000002485">
    <property type="component" value="Chromosome I"/>
</dbReference>
<dbReference type="GO" id="GO:0005829">
    <property type="term" value="C:cytosol"/>
    <property type="evidence" value="ECO:0000318"/>
    <property type="project" value="GO_Central"/>
</dbReference>
<dbReference type="GO" id="GO:0005759">
    <property type="term" value="C:mitochondrial matrix"/>
    <property type="evidence" value="ECO:0000305"/>
    <property type="project" value="PomBase"/>
</dbReference>
<dbReference type="GO" id="GO:0005739">
    <property type="term" value="C:mitochondrion"/>
    <property type="evidence" value="ECO:0007005"/>
    <property type="project" value="PomBase"/>
</dbReference>
<dbReference type="GO" id="GO:0004045">
    <property type="term" value="F:peptidyl-tRNA hydrolase activity"/>
    <property type="evidence" value="ECO:0000318"/>
    <property type="project" value="GO_Central"/>
</dbReference>
<dbReference type="GO" id="GO:0032543">
    <property type="term" value="P:mitochondrial translation"/>
    <property type="evidence" value="ECO:0000266"/>
    <property type="project" value="PomBase"/>
</dbReference>
<dbReference type="CDD" id="cd02430">
    <property type="entry name" value="PTH2"/>
    <property type="match status" value="1"/>
</dbReference>
<dbReference type="FunFam" id="3.40.1490.10:FF:000001">
    <property type="entry name" value="Peptidyl-tRNA hydrolase 2"/>
    <property type="match status" value="1"/>
</dbReference>
<dbReference type="Gene3D" id="3.40.1490.10">
    <property type="entry name" value="Bit1"/>
    <property type="match status" value="1"/>
</dbReference>
<dbReference type="InterPro" id="IPR023476">
    <property type="entry name" value="Pep_tRNA_hydro_II_dom_sf"/>
</dbReference>
<dbReference type="InterPro" id="IPR002833">
    <property type="entry name" value="PTH2"/>
</dbReference>
<dbReference type="NCBIfam" id="TIGR00283">
    <property type="entry name" value="arch_pth2"/>
    <property type="match status" value="1"/>
</dbReference>
<dbReference type="PANTHER" id="PTHR12649">
    <property type="entry name" value="PEPTIDYL-TRNA HYDROLASE 2"/>
    <property type="match status" value="1"/>
</dbReference>
<dbReference type="PANTHER" id="PTHR12649:SF11">
    <property type="entry name" value="PEPTIDYL-TRNA HYDROLASE 2, MITOCHONDRIAL"/>
    <property type="match status" value="1"/>
</dbReference>
<dbReference type="Pfam" id="PF01981">
    <property type="entry name" value="PTH2"/>
    <property type="match status" value="1"/>
</dbReference>
<dbReference type="SUPFAM" id="SSF102462">
    <property type="entry name" value="Peptidyl-tRNA hydrolase II"/>
    <property type="match status" value="1"/>
</dbReference>
<proteinExistence type="evidence at protein level"/>
<sequence length="205" mass="21429">MKVPFVNFMISSFPAAVLVGAVVGFMIGRKYSVADASRGYSSKNANKASNPEKESPVSVSNDEDSESETELLDMLKGNSSLAALALAEGQTKMVLVVRTDLGMTKGKIAAQCAHAALACYKIASAVDPDLVRIWENAGQAKITLQAQTEETLELLQAQAMSLGLCARVIHDAGRTQIASGSATVLGIGPGPVSVINEVTGSLKLF</sequence>
<reference key="1">
    <citation type="journal article" date="2002" name="Nature">
        <title>The genome sequence of Schizosaccharomyces pombe.</title>
        <authorList>
            <person name="Wood V."/>
            <person name="Gwilliam R."/>
            <person name="Rajandream M.A."/>
            <person name="Lyne M.H."/>
            <person name="Lyne R."/>
            <person name="Stewart A."/>
            <person name="Sgouros J.G."/>
            <person name="Peat N."/>
            <person name="Hayles J."/>
            <person name="Baker S.G."/>
            <person name="Basham D."/>
            <person name="Bowman S."/>
            <person name="Brooks K."/>
            <person name="Brown D."/>
            <person name="Brown S."/>
            <person name="Chillingworth T."/>
            <person name="Churcher C.M."/>
            <person name="Collins M."/>
            <person name="Connor R."/>
            <person name="Cronin A."/>
            <person name="Davis P."/>
            <person name="Feltwell T."/>
            <person name="Fraser A."/>
            <person name="Gentles S."/>
            <person name="Goble A."/>
            <person name="Hamlin N."/>
            <person name="Harris D.E."/>
            <person name="Hidalgo J."/>
            <person name="Hodgson G."/>
            <person name="Holroyd S."/>
            <person name="Hornsby T."/>
            <person name="Howarth S."/>
            <person name="Huckle E.J."/>
            <person name="Hunt S."/>
            <person name="Jagels K."/>
            <person name="James K.D."/>
            <person name="Jones L."/>
            <person name="Jones M."/>
            <person name="Leather S."/>
            <person name="McDonald S."/>
            <person name="McLean J."/>
            <person name="Mooney P."/>
            <person name="Moule S."/>
            <person name="Mungall K.L."/>
            <person name="Murphy L.D."/>
            <person name="Niblett D."/>
            <person name="Odell C."/>
            <person name="Oliver K."/>
            <person name="O'Neil S."/>
            <person name="Pearson D."/>
            <person name="Quail M.A."/>
            <person name="Rabbinowitsch E."/>
            <person name="Rutherford K.M."/>
            <person name="Rutter S."/>
            <person name="Saunders D."/>
            <person name="Seeger K."/>
            <person name="Sharp S."/>
            <person name="Skelton J."/>
            <person name="Simmonds M.N."/>
            <person name="Squares R."/>
            <person name="Squares S."/>
            <person name="Stevens K."/>
            <person name="Taylor K."/>
            <person name="Taylor R.G."/>
            <person name="Tivey A."/>
            <person name="Walsh S.V."/>
            <person name="Warren T."/>
            <person name="Whitehead S."/>
            <person name="Woodward J.R."/>
            <person name="Volckaert G."/>
            <person name="Aert R."/>
            <person name="Robben J."/>
            <person name="Grymonprez B."/>
            <person name="Weltjens I."/>
            <person name="Vanstreels E."/>
            <person name="Rieger M."/>
            <person name="Schaefer M."/>
            <person name="Mueller-Auer S."/>
            <person name="Gabel C."/>
            <person name="Fuchs M."/>
            <person name="Duesterhoeft A."/>
            <person name="Fritzc C."/>
            <person name="Holzer E."/>
            <person name="Moestl D."/>
            <person name="Hilbert H."/>
            <person name="Borzym K."/>
            <person name="Langer I."/>
            <person name="Beck A."/>
            <person name="Lehrach H."/>
            <person name="Reinhardt R."/>
            <person name="Pohl T.M."/>
            <person name="Eger P."/>
            <person name="Zimmermann W."/>
            <person name="Wedler H."/>
            <person name="Wambutt R."/>
            <person name="Purnelle B."/>
            <person name="Goffeau A."/>
            <person name="Cadieu E."/>
            <person name="Dreano S."/>
            <person name="Gloux S."/>
            <person name="Lelaure V."/>
            <person name="Mottier S."/>
            <person name="Galibert F."/>
            <person name="Aves S.J."/>
            <person name="Xiang Z."/>
            <person name="Hunt C."/>
            <person name="Moore K."/>
            <person name="Hurst S.M."/>
            <person name="Lucas M."/>
            <person name="Rochet M."/>
            <person name="Gaillardin C."/>
            <person name="Tallada V.A."/>
            <person name="Garzon A."/>
            <person name="Thode G."/>
            <person name="Daga R.R."/>
            <person name="Cruzado L."/>
            <person name="Jimenez J."/>
            <person name="Sanchez M."/>
            <person name="del Rey F."/>
            <person name="Benito J."/>
            <person name="Dominguez A."/>
            <person name="Revuelta J.L."/>
            <person name="Moreno S."/>
            <person name="Armstrong J."/>
            <person name="Forsburg S.L."/>
            <person name="Cerutti L."/>
            <person name="Lowe T."/>
            <person name="McCombie W.R."/>
            <person name="Paulsen I."/>
            <person name="Potashkin J."/>
            <person name="Shpakovski G.V."/>
            <person name="Ussery D."/>
            <person name="Barrell B.G."/>
            <person name="Nurse P."/>
        </authorList>
    </citation>
    <scope>NUCLEOTIDE SEQUENCE [LARGE SCALE GENOMIC DNA]</scope>
    <source>
        <strain>972 / ATCC 24843</strain>
    </source>
</reference>
<reference key="2">
    <citation type="journal article" date="2008" name="J. Proteome Res.">
        <title>Phosphoproteome analysis of fission yeast.</title>
        <authorList>
            <person name="Wilson-Grady J.T."/>
            <person name="Villen J."/>
            <person name="Gygi S.P."/>
        </authorList>
    </citation>
    <scope>PHOSPHORYLATION [LARGE SCALE ANALYSIS] AT SER-65 AND SER-79</scope>
    <scope>IDENTIFICATION BY MASS SPECTROMETRY</scope>
</reference>
<name>PTH2_SCHPO</name>
<feature type="chain" id="PRO_0000120285" description="Probable peptidyl-tRNA hydrolase 2">
    <location>
        <begin position="1"/>
        <end position="205"/>
    </location>
</feature>
<feature type="region of interest" description="Disordered" evidence="2">
    <location>
        <begin position="40"/>
        <end position="68"/>
    </location>
</feature>
<feature type="compositionally biased region" description="Polar residues" evidence="2">
    <location>
        <begin position="40"/>
        <end position="49"/>
    </location>
</feature>
<feature type="modified residue" description="Phosphoserine" evidence="3">
    <location>
        <position position="65"/>
    </location>
</feature>
<feature type="modified residue" description="Phosphoserine" evidence="3">
    <location>
        <position position="79"/>
    </location>
</feature>
<accession>O13830</accession>
<gene>
    <name type="ORF">SPAC19A8.14</name>
</gene>